<organism>
    <name type="scientific">Parasynechococcus marenigrum (strain WH8102)</name>
    <dbReference type="NCBI Taxonomy" id="84588"/>
    <lineage>
        <taxon>Bacteria</taxon>
        <taxon>Bacillati</taxon>
        <taxon>Cyanobacteriota</taxon>
        <taxon>Cyanophyceae</taxon>
        <taxon>Synechococcales</taxon>
        <taxon>Prochlorococcaceae</taxon>
        <taxon>Parasynechococcus</taxon>
        <taxon>Parasynechococcus marenigrum</taxon>
    </lineage>
</organism>
<gene>
    <name evidence="1" type="primary">sasA</name>
    <name type="ordered locus">SYNW0753</name>
</gene>
<protein>
    <recommendedName>
        <fullName evidence="1">Adaptive-response sensory kinase SasA</fullName>
        <ecNumber evidence="1">2.7.13.3</ecNumber>
    </recommendedName>
    <alternativeName>
        <fullName evidence="1">Sensor histidine kinase SasA</fullName>
    </alternativeName>
</protein>
<comment type="function">
    <text evidence="1">Member of the two-component regulatory system SasA/RpaA involved in genome-wide circadian gene expression. One of several clock output pathways. Participates in the Kai clock protein complex, the main circadian regulator in cyanobacteria, via its interaction with KaiC. KaiC enhances the autophosphorylation activity of SasA, which then transfers its phosphate group to RpaA to activate it. In addition to its output function, recruits fold-shifted KaiB (KaiB(fs)) to KaiC to cooperatively form the KaiB(6):KaiC(6) complex (independent of SasA kinase activity). Required for robustness of the circadian rhythm of gene expression and is involved in clock output, also required for adaptation to light/dark cycles.</text>
</comment>
<comment type="catalytic activity">
    <reaction evidence="1">
        <text>ATP + protein L-histidine = ADP + protein N-phospho-L-histidine.</text>
        <dbReference type="EC" id="2.7.13.3"/>
    </reaction>
</comment>
<comment type="subunit">
    <text evidence="1">Homooligomerizes. Interacts with KaiC. Participates in the KaiABC clock complex, whose core is composed of a KaiC homohexamer, 6 KaiB and up to 6 KaiA dimers. SasA and KaiB(fs) compete to bind to KaiC.</text>
</comment>
<comment type="domain">
    <text evidence="1">The N-terminus interacts with KaiC, while the C-terminal histidine kinase domain autophosphorylates and is probably responsible for self-oligomerization. The N-terminal domain stimulates the C-terminus to autophosphorylate.</text>
</comment>
<name>SASA_PARMW</name>
<proteinExistence type="inferred from homology"/>
<evidence type="ECO:0000255" key="1">
    <source>
        <dbReference type="HAMAP-Rule" id="MF_01837"/>
    </source>
</evidence>
<sequence>MGEDDPKGRQRLKLLLVAARHHLSGPDLRSVVHYLERDDVGFQVTLQLADPSQQPELLELHRLVITPALIKLSPAPKQVFAGSNILQQLKGWVPRWQQDGVVSGLGLSLRPTELDGSRTQKELQLEDQLLVLRQENETLIDRIHAQERLLRMVAHELRTPLTAAALALQSQRLGQIDMTRFQDVITRRLEEMEALSKDLLEVGTTRWETLFNPQRLDLASVSAEVILELEKLWLGRNVEIRTDIPSDLPKVFADQRRMRQVLLNLLENALKYTGNGGHITLTMLHRTSQRVEVSVCDSGPGIPTEEQQRIFLDRVRLPQTSDRTTGFGVGLSVCRRIVEVHGGRIWVVSEPGEGACFTFTVPIWQGQGQEWGQAVLTEGELEP</sequence>
<keyword id="KW-0067">ATP-binding</keyword>
<keyword id="KW-0090">Biological rhythms</keyword>
<keyword id="KW-0418">Kinase</keyword>
<keyword id="KW-0547">Nucleotide-binding</keyword>
<keyword id="KW-0597">Phosphoprotein</keyword>
<keyword id="KW-0808">Transferase</keyword>
<keyword id="KW-0902">Two-component regulatory system</keyword>
<accession>Q7U871</accession>
<feature type="chain" id="PRO_0000074873" description="Adaptive-response sensory kinase SasA">
    <location>
        <begin position="1"/>
        <end position="383"/>
    </location>
</feature>
<feature type="domain" description="Histidine kinase" evidence="1">
    <location>
        <begin position="152"/>
        <end position="365"/>
    </location>
</feature>
<feature type="modified residue" description="Phosphohistidine; by autocatalysis" evidence="1">
    <location>
        <position position="155"/>
    </location>
</feature>
<dbReference type="EC" id="2.7.13.3" evidence="1"/>
<dbReference type="EMBL" id="BX569691">
    <property type="protein sequence ID" value="CAE07268.1"/>
    <property type="molecule type" value="Genomic_DNA"/>
</dbReference>
<dbReference type="RefSeq" id="WP_011127618.1">
    <property type="nucleotide sequence ID" value="NC_005070.1"/>
</dbReference>
<dbReference type="SMR" id="Q7U871"/>
<dbReference type="STRING" id="84588.SYNW0753"/>
<dbReference type="KEGG" id="syw:SYNW0753"/>
<dbReference type="eggNOG" id="COG2205">
    <property type="taxonomic scope" value="Bacteria"/>
</dbReference>
<dbReference type="HOGENOM" id="CLU_723030_0_0_3"/>
<dbReference type="Proteomes" id="UP000001422">
    <property type="component" value="Chromosome"/>
</dbReference>
<dbReference type="GO" id="GO:0005524">
    <property type="term" value="F:ATP binding"/>
    <property type="evidence" value="ECO:0007669"/>
    <property type="project" value="UniProtKB-KW"/>
</dbReference>
<dbReference type="GO" id="GO:0000156">
    <property type="term" value="F:phosphorelay response regulator activity"/>
    <property type="evidence" value="ECO:0007669"/>
    <property type="project" value="TreeGrafter"/>
</dbReference>
<dbReference type="GO" id="GO:0000155">
    <property type="term" value="F:phosphorelay sensor kinase activity"/>
    <property type="evidence" value="ECO:0007669"/>
    <property type="project" value="InterPro"/>
</dbReference>
<dbReference type="GO" id="GO:0030295">
    <property type="term" value="F:protein kinase activator activity"/>
    <property type="evidence" value="ECO:0007669"/>
    <property type="project" value="TreeGrafter"/>
</dbReference>
<dbReference type="GO" id="GO:0007623">
    <property type="term" value="P:circadian rhythm"/>
    <property type="evidence" value="ECO:0007669"/>
    <property type="project" value="UniProtKB-UniRule"/>
</dbReference>
<dbReference type="GO" id="GO:0007234">
    <property type="term" value="P:osmosensory signaling via phosphorelay pathway"/>
    <property type="evidence" value="ECO:0007669"/>
    <property type="project" value="TreeGrafter"/>
</dbReference>
<dbReference type="CDD" id="cd00075">
    <property type="entry name" value="HATPase"/>
    <property type="match status" value="1"/>
</dbReference>
<dbReference type="CDD" id="cd00082">
    <property type="entry name" value="HisKA"/>
    <property type="match status" value="1"/>
</dbReference>
<dbReference type="CDD" id="cd02978">
    <property type="entry name" value="KaiB_like"/>
    <property type="match status" value="1"/>
</dbReference>
<dbReference type="FunFam" id="3.30.565.10:FF:000006">
    <property type="entry name" value="Sensor histidine kinase WalK"/>
    <property type="match status" value="1"/>
</dbReference>
<dbReference type="Gene3D" id="1.10.287.130">
    <property type="match status" value="1"/>
</dbReference>
<dbReference type="Gene3D" id="3.40.30.10">
    <property type="entry name" value="Glutaredoxin"/>
    <property type="match status" value="1"/>
</dbReference>
<dbReference type="Gene3D" id="3.30.565.10">
    <property type="entry name" value="Histidine kinase-like ATPase, C-terminal domain"/>
    <property type="match status" value="1"/>
</dbReference>
<dbReference type="HAMAP" id="MF_01837">
    <property type="entry name" value="Kinase_SasA"/>
    <property type="match status" value="1"/>
</dbReference>
<dbReference type="InterPro" id="IPR036890">
    <property type="entry name" value="HATPase_C_sf"/>
</dbReference>
<dbReference type="InterPro" id="IPR005467">
    <property type="entry name" value="His_kinase_dom"/>
</dbReference>
<dbReference type="InterPro" id="IPR003661">
    <property type="entry name" value="HisK_dim/P_dom"/>
</dbReference>
<dbReference type="InterPro" id="IPR036097">
    <property type="entry name" value="HisK_dim/P_sf"/>
</dbReference>
<dbReference type="InterPro" id="IPR011649">
    <property type="entry name" value="KaiB_domain"/>
</dbReference>
<dbReference type="InterPro" id="IPR023527">
    <property type="entry name" value="Kinase_SasA"/>
</dbReference>
<dbReference type="InterPro" id="IPR052545">
    <property type="entry name" value="Light-responsive_reg"/>
</dbReference>
<dbReference type="InterPro" id="IPR004358">
    <property type="entry name" value="Sig_transdc_His_kin-like_C"/>
</dbReference>
<dbReference type="InterPro" id="IPR036249">
    <property type="entry name" value="Thioredoxin-like_sf"/>
</dbReference>
<dbReference type="NCBIfam" id="NF006800">
    <property type="entry name" value="PRK09303.1"/>
    <property type="match status" value="1"/>
</dbReference>
<dbReference type="PANTHER" id="PTHR42878:SF7">
    <property type="entry name" value="SENSOR HISTIDINE KINASE GLRK"/>
    <property type="match status" value="1"/>
</dbReference>
<dbReference type="PANTHER" id="PTHR42878">
    <property type="entry name" value="TWO-COMPONENT HISTIDINE KINASE"/>
    <property type="match status" value="1"/>
</dbReference>
<dbReference type="Pfam" id="PF02518">
    <property type="entry name" value="HATPase_c"/>
    <property type="match status" value="1"/>
</dbReference>
<dbReference type="Pfam" id="PF00512">
    <property type="entry name" value="HisKA"/>
    <property type="match status" value="1"/>
</dbReference>
<dbReference type="Pfam" id="PF07689">
    <property type="entry name" value="KaiB"/>
    <property type="match status" value="1"/>
</dbReference>
<dbReference type="PRINTS" id="PR00344">
    <property type="entry name" value="BCTRLSENSOR"/>
</dbReference>
<dbReference type="SMART" id="SM00387">
    <property type="entry name" value="HATPase_c"/>
    <property type="match status" value="1"/>
</dbReference>
<dbReference type="SMART" id="SM00388">
    <property type="entry name" value="HisKA"/>
    <property type="match status" value="1"/>
</dbReference>
<dbReference type="SMART" id="SM01248">
    <property type="entry name" value="KaiB"/>
    <property type="match status" value="1"/>
</dbReference>
<dbReference type="SUPFAM" id="SSF55874">
    <property type="entry name" value="ATPase domain of HSP90 chaperone/DNA topoisomerase II/histidine kinase"/>
    <property type="match status" value="1"/>
</dbReference>
<dbReference type="SUPFAM" id="SSF47384">
    <property type="entry name" value="Homodimeric domain of signal transducing histidine kinase"/>
    <property type="match status" value="1"/>
</dbReference>
<dbReference type="SUPFAM" id="SSF52833">
    <property type="entry name" value="Thioredoxin-like"/>
    <property type="match status" value="1"/>
</dbReference>
<dbReference type="PROSITE" id="PS50109">
    <property type="entry name" value="HIS_KIN"/>
    <property type="match status" value="1"/>
</dbReference>
<reference key="1">
    <citation type="journal article" date="2003" name="Nature">
        <title>The genome of a motile marine Synechococcus.</title>
        <authorList>
            <person name="Palenik B."/>
            <person name="Brahamsha B."/>
            <person name="Larimer F.W."/>
            <person name="Land M.L."/>
            <person name="Hauser L."/>
            <person name="Chain P."/>
            <person name="Lamerdin J.E."/>
            <person name="Regala W."/>
            <person name="Allen E.E."/>
            <person name="McCarren J."/>
            <person name="Paulsen I.T."/>
            <person name="Dufresne A."/>
            <person name="Partensky F."/>
            <person name="Webb E.A."/>
            <person name="Waterbury J."/>
        </authorList>
    </citation>
    <scope>NUCLEOTIDE SEQUENCE [LARGE SCALE GENOMIC DNA]</scope>
    <source>
        <strain>WH8102</strain>
    </source>
</reference>